<feature type="chain" id="PRO_0000226293" description="Claudin-11">
    <location>
        <begin position="1"/>
        <end position="207"/>
    </location>
</feature>
<feature type="topological domain" description="Cytoplasmic" evidence="4">
    <location>
        <position position="1"/>
    </location>
</feature>
<feature type="transmembrane region" description="Helical" evidence="4">
    <location>
        <begin position="2"/>
        <end position="22"/>
    </location>
</feature>
<feature type="topological domain" description="Extracellular" evidence="4">
    <location>
        <begin position="23"/>
        <end position="82"/>
    </location>
</feature>
<feature type="transmembrane region" description="Helical" evidence="4">
    <location>
        <begin position="83"/>
        <end position="103"/>
    </location>
</feature>
<feature type="topological domain" description="Cytoplasmic" evidence="4">
    <location>
        <begin position="104"/>
        <end position="122"/>
    </location>
</feature>
<feature type="transmembrane region" description="Helical" evidence="4">
    <location>
        <begin position="123"/>
        <end position="143"/>
    </location>
</feature>
<feature type="topological domain" description="Extracellular" evidence="4">
    <location>
        <begin position="144"/>
        <end position="157"/>
    </location>
</feature>
<feature type="transmembrane region" description="Helical" evidence="4">
    <location>
        <begin position="158"/>
        <end position="178"/>
    </location>
</feature>
<feature type="topological domain" description="Cytoplasmic" evidence="4">
    <location>
        <begin position="179"/>
        <end position="207"/>
    </location>
</feature>
<feature type="modified residue" description="Phosphoserine" evidence="3">
    <location>
        <position position="193"/>
    </location>
</feature>
<feature type="modified residue" description="Phosphoserine" evidence="2">
    <location>
        <position position="194"/>
    </location>
</feature>
<feature type="modified residue" description="Phosphoserine" evidence="2">
    <location>
        <position position="197"/>
    </location>
</feature>
<feature type="modified residue" description="Phosphoserine" evidence="2">
    <location>
        <position position="198"/>
    </location>
</feature>
<accession>Q3MHK4</accession>
<dbReference type="EMBL" id="BC105204">
    <property type="protein sequence ID" value="AAI05205.1"/>
    <property type="molecule type" value="mRNA"/>
</dbReference>
<dbReference type="RefSeq" id="NP_001030227.1">
    <property type="nucleotide sequence ID" value="NM_001035055.2"/>
</dbReference>
<dbReference type="SMR" id="Q3MHK4"/>
<dbReference type="FunCoup" id="Q3MHK4">
    <property type="interactions" value="438"/>
</dbReference>
<dbReference type="STRING" id="9913.ENSBTAP00000025374"/>
<dbReference type="PaxDb" id="9913-ENSBTAP00000025374"/>
<dbReference type="GeneID" id="508268"/>
<dbReference type="KEGG" id="bta:508268"/>
<dbReference type="CTD" id="5010"/>
<dbReference type="eggNOG" id="ENOG502QSDJ">
    <property type="taxonomic scope" value="Eukaryota"/>
</dbReference>
<dbReference type="InParanoid" id="Q3MHK4"/>
<dbReference type="OrthoDB" id="9411914at2759"/>
<dbReference type="Proteomes" id="UP000009136">
    <property type="component" value="Unplaced"/>
</dbReference>
<dbReference type="GO" id="GO:0005923">
    <property type="term" value="C:bicellular tight junction"/>
    <property type="evidence" value="ECO:0000318"/>
    <property type="project" value="GO_Central"/>
</dbReference>
<dbReference type="GO" id="GO:0005886">
    <property type="term" value="C:plasma membrane"/>
    <property type="evidence" value="ECO:0000318"/>
    <property type="project" value="GO_Central"/>
</dbReference>
<dbReference type="GO" id="GO:0005198">
    <property type="term" value="F:structural molecule activity"/>
    <property type="evidence" value="ECO:0007669"/>
    <property type="project" value="InterPro"/>
</dbReference>
<dbReference type="GO" id="GO:0070830">
    <property type="term" value="P:bicellular tight junction assembly"/>
    <property type="evidence" value="ECO:0000318"/>
    <property type="project" value="GO_Central"/>
</dbReference>
<dbReference type="GO" id="GO:0007155">
    <property type="term" value="P:cell adhesion"/>
    <property type="evidence" value="ECO:0000318"/>
    <property type="project" value="GO_Central"/>
</dbReference>
<dbReference type="FunFam" id="1.20.140.150:FF:000015">
    <property type="entry name" value="Claudin"/>
    <property type="match status" value="1"/>
</dbReference>
<dbReference type="Gene3D" id="1.20.140.150">
    <property type="match status" value="1"/>
</dbReference>
<dbReference type="InterPro" id="IPR006187">
    <property type="entry name" value="Claudin"/>
</dbReference>
<dbReference type="InterPro" id="IPR003555">
    <property type="entry name" value="Claudin11"/>
</dbReference>
<dbReference type="InterPro" id="IPR017974">
    <property type="entry name" value="Claudin_CS"/>
</dbReference>
<dbReference type="InterPro" id="IPR004031">
    <property type="entry name" value="PMP22/EMP/MP20/Claudin"/>
</dbReference>
<dbReference type="PANTHER" id="PTHR12002">
    <property type="entry name" value="CLAUDIN"/>
    <property type="match status" value="1"/>
</dbReference>
<dbReference type="Pfam" id="PF00822">
    <property type="entry name" value="PMP22_Claudin"/>
    <property type="match status" value="1"/>
</dbReference>
<dbReference type="PRINTS" id="PR01077">
    <property type="entry name" value="CLAUDIN"/>
</dbReference>
<dbReference type="PRINTS" id="PR01384">
    <property type="entry name" value="CLAUDIN11"/>
</dbReference>
<dbReference type="PROSITE" id="PS01346">
    <property type="entry name" value="CLAUDIN"/>
    <property type="match status" value="1"/>
</dbReference>
<proteinExistence type="evidence at transcript level"/>
<evidence type="ECO:0000250" key="1">
    <source>
        <dbReference type="UniProtKB" id="O75508"/>
    </source>
</evidence>
<evidence type="ECO:0000250" key="2">
    <source>
        <dbReference type="UniProtKB" id="Q60771"/>
    </source>
</evidence>
<evidence type="ECO:0000250" key="3">
    <source>
        <dbReference type="UniProtKB" id="Q99P82"/>
    </source>
</evidence>
<evidence type="ECO:0000255" key="4"/>
<evidence type="ECO:0000305" key="5"/>
<organism>
    <name type="scientific">Bos taurus</name>
    <name type="common">Bovine</name>
    <dbReference type="NCBI Taxonomy" id="9913"/>
    <lineage>
        <taxon>Eukaryota</taxon>
        <taxon>Metazoa</taxon>
        <taxon>Chordata</taxon>
        <taxon>Craniata</taxon>
        <taxon>Vertebrata</taxon>
        <taxon>Euteleostomi</taxon>
        <taxon>Mammalia</taxon>
        <taxon>Eutheria</taxon>
        <taxon>Laurasiatheria</taxon>
        <taxon>Artiodactyla</taxon>
        <taxon>Ruminantia</taxon>
        <taxon>Pecora</taxon>
        <taxon>Bovidae</taxon>
        <taxon>Bovinae</taxon>
        <taxon>Bos</taxon>
    </lineage>
</organism>
<name>CLD11_BOVIN</name>
<sequence length="207" mass="22012">MVATCLQVVGFVTSFVGWIGIIVTTSTNDWVVTCGYTIPTCRKLDELGSKGLWADCVMATGLYHCKPLVDILILPGYVQACRALMIAASVLGLPAILLLLTVLPCIRMGHEPGVAKYRRAQLAGVMLVLVALCAMVATIWFPVCAHRETTIVSFGYSLYAGWIGAVLCLVGGCVIVCCAGDAQAFGENRFYYSSGSSSPTHAKSAHV</sequence>
<reference key="1">
    <citation type="submission" date="2005-09" db="EMBL/GenBank/DDBJ databases">
        <authorList>
            <consortium name="NIH - Mammalian Gene Collection (MGC) project"/>
        </authorList>
    </citation>
    <scope>NUCLEOTIDE SEQUENCE [LARGE SCALE MRNA]</scope>
    <source>
        <strain>Hereford</strain>
        <tissue>Kidney</tissue>
    </source>
</reference>
<comment type="function">
    <text evidence="1">Plays a major role in tight junction-specific obliteration of the intercellular space, through calcium-independent cell-adhesion activity.</text>
</comment>
<comment type="subunit">
    <text evidence="1 2">Interacts with tetraspanin-3/TSPAN3. Interacts with OCLN.</text>
</comment>
<comment type="subcellular location">
    <subcellularLocation>
        <location evidence="1">Cell junction</location>
        <location evidence="1">Tight junction</location>
    </subcellularLocation>
    <subcellularLocation>
        <location evidence="1">Cell membrane</location>
        <topology evidence="4">Multi-pass membrane protein</topology>
    </subcellularLocation>
</comment>
<comment type="similarity">
    <text evidence="5">Belongs to the claudin family.</text>
</comment>
<keyword id="KW-0965">Cell junction</keyword>
<keyword id="KW-1003">Cell membrane</keyword>
<keyword id="KW-0472">Membrane</keyword>
<keyword id="KW-0597">Phosphoprotein</keyword>
<keyword id="KW-1185">Reference proteome</keyword>
<keyword id="KW-0796">Tight junction</keyword>
<keyword id="KW-0812">Transmembrane</keyword>
<keyword id="KW-1133">Transmembrane helix</keyword>
<gene>
    <name type="primary">CLDN11</name>
</gene>
<protein>
    <recommendedName>
        <fullName>Claudin-11</fullName>
    </recommendedName>
</protein>